<reference key="1">
    <citation type="journal article" date="1991" name="J. Biol. Chem.">
        <title>Casein kinase II from Caenorhabditis elegans. Cloning, characterization, and developmental regulation of the gene encoding the beta subunit.</title>
        <authorList>
            <person name="Hu E."/>
            <person name="Rubin C.S."/>
        </authorList>
    </citation>
    <scope>NUCLEOTIDE SEQUENCE [GENOMIC DNA] (ISOFORM A)</scope>
</reference>
<reference key="2">
    <citation type="journal article" date="1998" name="Science">
        <title>Genome sequence of the nematode C. elegans: a platform for investigating biology.</title>
        <authorList>
            <consortium name="The C. elegans sequencing consortium"/>
        </authorList>
    </citation>
    <scope>NUCLEOTIDE SEQUENCE [LARGE SCALE GENOMIC DNA]</scope>
    <scope>ALTERNATIVE SPLICING</scope>
    <source>
        <strain>Bristol N2</strain>
    </source>
</reference>
<reference key="3">
    <citation type="journal article" date="2006" name="Mol. Biol. Cell">
        <title>Casein kinase II and calcineurin modulate TRPP function and ciliary localization.</title>
        <authorList>
            <person name="Hu J."/>
            <person name="Bae Y.-K."/>
            <person name="Knobel K.M."/>
            <person name="Barr M.M."/>
        </authorList>
    </citation>
    <scope>FUNCTION</scope>
    <scope>INTERACTION WITH LOV-1</scope>
    <scope>SUBCELLULAR LOCATION</scope>
    <scope>TISSUE SPECIFICITY</scope>
</reference>
<gene>
    <name type="primary">kin-10</name>
    <name type="synonym">kin-5</name>
    <name type="ORF">T01G9.6</name>
</gene>
<keyword id="KW-0025">Alternative splicing</keyword>
<keyword id="KW-0085">Behavior</keyword>
<keyword id="KW-0966">Cell projection</keyword>
<keyword id="KW-0969">Cilium</keyword>
<keyword id="KW-0597">Phosphoprotein</keyword>
<keyword id="KW-1185">Reference proteome</keyword>
<keyword id="KW-0879">Wnt signaling pathway</keyword>
<sequence>MSSSEEVSWITWFCGLRGNEFFCEVDEEYIQDRFNLTGLNEQVPKYRQALDMILDLEPDDIEDNATNTDLVEQAAEMLYGLIHARYILTNRGISQMVEKWRDHDFGVCPRVYCENQPMLPIGLSDVPGEAMVKLYCPRCNDVFVPRSSRHQHTDGSYFGTGFPHMLFFVHPDLRPRRPVTQFVPKLYGFKIHPVAYGGQEGNSGGNTANNVAAAQNNTTPAGQQSGGQFNNYGL</sequence>
<dbReference type="EMBL" id="M73827">
    <property type="protein sequence ID" value="AAA27983.1"/>
    <property type="molecule type" value="Genomic_DNA"/>
</dbReference>
<dbReference type="EMBL" id="Z75713">
    <property type="protein sequence ID" value="CAB00056.1"/>
    <property type="molecule type" value="Genomic_DNA"/>
</dbReference>
<dbReference type="EMBL" id="Z75713">
    <property type="protein sequence ID" value="CAB00053.1"/>
    <property type="molecule type" value="Genomic_DNA"/>
</dbReference>
<dbReference type="PIR" id="B87852">
    <property type="entry name" value="B87852"/>
</dbReference>
<dbReference type="PIR" id="T24317">
    <property type="entry name" value="T24317"/>
</dbReference>
<dbReference type="RefSeq" id="NP_001379151.1">
    <molecule id="P28548-2"/>
    <property type="nucleotide sequence ID" value="NM_001392666.1"/>
</dbReference>
<dbReference type="RefSeq" id="NP_001379152.1">
    <molecule id="P28548-1"/>
    <property type="nucleotide sequence ID" value="NM_001392665.1"/>
</dbReference>
<dbReference type="RefSeq" id="NP_492254.1">
    <property type="nucleotide sequence ID" value="NM_059853.3"/>
</dbReference>
<dbReference type="RefSeq" id="NP_492255.1">
    <property type="nucleotide sequence ID" value="NM_059854.4"/>
</dbReference>
<dbReference type="SMR" id="P28548"/>
<dbReference type="BioGRID" id="38044">
    <property type="interactions" value="32"/>
</dbReference>
<dbReference type="FunCoup" id="P28548">
    <property type="interactions" value="3094"/>
</dbReference>
<dbReference type="IntAct" id="P28548">
    <property type="interactions" value="15"/>
</dbReference>
<dbReference type="STRING" id="6239.T01G9.6b.2"/>
<dbReference type="PaxDb" id="6239-T01G9.6b.1"/>
<dbReference type="PeptideAtlas" id="P28548"/>
<dbReference type="EnsemblMetazoa" id="T01G9.6a.1">
    <molecule id="P28548-1"/>
    <property type="protein sequence ID" value="T01G9.6a.1"/>
    <property type="gene ID" value="WBGene00002196"/>
</dbReference>
<dbReference type="EnsemblMetazoa" id="T01G9.6a.2">
    <molecule id="P28548-1"/>
    <property type="protein sequence ID" value="T01G9.6a.2"/>
    <property type="gene ID" value="WBGene00002196"/>
</dbReference>
<dbReference type="EnsemblMetazoa" id="T01G9.6b.1">
    <molecule id="P28548-2"/>
    <property type="protein sequence ID" value="T01G9.6b.1"/>
    <property type="gene ID" value="WBGene00002196"/>
</dbReference>
<dbReference type="EnsemblMetazoa" id="T01G9.6b.2">
    <molecule id="P28548-2"/>
    <property type="protein sequence ID" value="T01G9.6b.2"/>
    <property type="gene ID" value="WBGene00002196"/>
</dbReference>
<dbReference type="GeneID" id="172610"/>
<dbReference type="UCSC" id="T01G9.6a.1">
    <molecule id="P28548-1"/>
    <property type="organism name" value="c. elegans"/>
</dbReference>
<dbReference type="AGR" id="WB:WBGene00002196"/>
<dbReference type="WormBase" id="T01G9.6a">
    <molecule id="P28548-1"/>
    <property type="protein sequence ID" value="CE18168"/>
    <property type="gene ID" value="WBGene00002196"/>
    <property type="gene designation" value="kin-10"/>
</dbReference>
<dbReference type="WormBase" id="T01G9.6b">
    <molecule id="P28548-2"/>
    <property type="protein sequence ID" value="CE06343"/>
    <property type="gene ID" value="WBGene00002196"/>
    <property type="gene designation" value="kin-10"/>
</dbReference>
<dbReference type="eggNOG" id="KOG3092">
    <property type="taxonomic scope" value="Eukaryota"/>
</dbReference>
<dbReference type="GeneTree" id="ENSGT00390000003781"/>
<dbReference type="HOGENOM" id="CLU_034027_3_3_1"/>
<dbReference type="InParanoid" id="P28548"/>
<dbReference type="OMA" id="DADFGRC"/>
<dbReference type="OrthoDB" id="3971593at2759"/>
<dbReference type="PhylomeDB" id="P28548"/>
<dbReference type="Reactome" id="R-CEL-1483191">
    <property type="pathway name" value="Synthesis of PC"/>
</dbReference>
<dbReference type="Reactome" id="R-CEL-201688">
    <property type="pathway name" value="WNT mediated activation of DVL"/>
</dbReference>
<dbReference type="Reactome" id="R-CEL-445144">
    <property type="pathway name" value="Signal transduction by L1"/>
</dbReference>
<dbReference type="Reactome" id="R-CEL-6798695">
    <property type="pathway name" value="Neutrophil degranulation"/>
</dbReference>
<dbReference type="Reactome" id="R-CEL-6804756">
    <property type="pathway name" value="Regulation of TP53 Activity through Phosphorylation"/>
</dbReference>
<dbReference type="Reactome" id="R-CEL-6814122">
    <property type="pathway name" value="Cooperation of PDCL (PhLP1) and TRiC/CCT in G-protein beta folding"/>
</dbReference>
<dbReference type="Reactome" id="R-CEL-8934903">
    <property type="pathway name" value="Receptor Mediated Mitophagy"/>
</dbReference>
<dbReference type="Reactome" id="R-CEL-8948751">
    <property type="pathway name" value="Regulation of PTEN stability and activity"/>
</dbReference>
<dbReference type="SignaLink" id="P28548"/>
<dbReference type="PRO" id="PR:P28548"/>
<dbReference type="Proteomes" id="UP000001940">
    <property type="component" value="Chromosome I"/>
</dbReference>
<dbReference type="Bgee" id="WBGene00002196">
    <property type="expression patterns" value="Expressed in embryo and 4 other cell types or tissues"/>
</dbReference>
<dbReference type="GO" id="GO:0030424">
    <property type="term" value="C:axon"/>
    <property type="evidence" value="ECO:0000314"/>
    <property type="project" value="UniProtKB"/>
</dbReference>
<dbReference type="GO" id="GO:0005929">
    <property type="term" value="C:cilium"/>
    <property type="evidence" value="ECO:0000314"/>
    <property type="project" value="UniProtKB"/>
</dbReference>
<dbReference type="GO" id="GO:0005737">
    <property type="term" value="C:cytoplasm"/>
    <property type="evidence" value="ECO:0000318"/>
    <property type="project" value="GO_Central"/>
</dbReference>
<dbReference type="GO" id="GO:0030425">
    <property type="term" value="C:dendrite"/>
    <property type="evidence" value="ECO:0000314"/>
    <property type="project" value="UniProtKB"/>
</dbReference>
<dbReference type="GO" id="GO:0043025">
    <property type="term" value="C:neuronal cell body"/>
    <property type="evidence" value="ECO:0000314"/>
    <property type="project" value="UniProtKB"/>
</dbReference>
<dbReference type="GO" id="GO:0097730">
    <property type="term" value="C:non-motile cilium"/>
    <property type="evidence" value="ECO:0000314"/>
    <property type="project" value="WormBase"/>
</dbReference>
<dbReference type="GO" id="GO:0005634">
    <property type="term" value="C:nucleus"/>
    <property type="evidence" value="ECO:0000314"/>
    <property type="project" value="WormBase"/>
</dbReference>
<dbReference type="GO" id="GO:0043204">
    <property type="term" value="C:perikaryon"/>
    <property type="evidence" value="ECO:0007669"/>
    <property type="project" value="UniProtKB-SubCell"/>
</dbReference>
<dbReference type="GO" id="GO:0005956">
    <property type="term" value="C:protein kinase CK2 complex"/>
    <property type="evidence" value="ECO:0000314"/>
    <property type="project" value="WormBase"/>
</dbReference>
<dbReference type="GO" id="GO:0019887">
    <property type="term" value="F:protein kinase regulator activity"/>
    <property type="evidence" value="ECO:0000318"/>
    <property type="project" value="GO_Central"/>
</dbReference>
<dbReference type="GO" id="GO:0034606">
    <property type="term" value="P:response to hermaphrodite contact"/>
    <property type="evidence" value="ECO:0000315"/>
    <property type="project" value="UniProtKB"/>
</dbReference>
<dbReference type="GO" id="GO:0034608">
    <property type="term" value="P:vulval location"/>
    <property type="evidence" value="ECO:0000315"/>
    <property type="project" value="UniProtKB"/>
</dbReference>
<dbReference type="GO" id="GO:0016055">
    <property type="term" value="P:Wnt signaling pathway"/>
    <property type="evidence" value="ECO:0007669"/>
    <property type="project" value="UniProtKB-KW"/>
</dbReference>
<dbReference type="FunFam" id="1.10.1820.10:FF:000001">
    <property type="entry name" value="Casein kinase II subunit beta"/>
    <property type="match status" value="1"/>
</dbReference>
<dbReference type="FunFam" id="2.20.25.20:FF:000002">
    <property type="entry name" value="Casein kinase II subunit beta"/>
    <property type="match status" value="1"/>
</dbReference>
<dbReference type="Gene3D" id="2.20.25.20">
    <property type="match status" value="1"/>
</dbReference>
<dbReference type="Gene3D" id="1.10.1820.10">
    <property type="entry name" value="protein kinase ck2 holoenzyme, chain C, domain 1"/>
    <property type="match status" value="1"/>
</dbReference>
<dbReference type="InterPro" id="IPR016149">
    <property type="entry name" value="Casein_kin_II_reg-sub_N"/>
</dbReference>
<dbReference type="InterPro" id="IPR035991">
    <property type="entry name" value="Casein_kinase_II_beta-like"/>
</dbReference>
<dbReference type="InterPro" id="IPR000704">
    <property type="entry name" value="Casein_kinase_II_reg-sub"/>
</dbReference>
<dbReference type="PANTHER" id="PTHR11740">
    <property type="entry name" value="CASEIN KINASE II SUBUNIT BETA"/>
    <property type="match status" value="1"/>
</dbReference>
<dbReference type="PANTHER" id="PTHR11740:SF0">
    <property type="entry name" value="CASEIN KINASE II SUBUNIT BETA"/>
    <property type="match status" value="1"/>
</dbReference>
<dbReference type="Pfam" id="PF01214">
    <property type="entry name" value="CK_II_beta"/>
    <property type="match status" value="1"/>
</dbReference>
<dbReference type="PRINTS" id="PR00472">
    <property type="entry name" value="CASNKINASEII"/>
</dbReference>
<dbReference type="SMART" id="SM01085">
    <property type="entry name" value="CK_II_beta"/>
    <property type="match status" value="1"/>
</dbReference>
<dbReference type="SUPFAM" id="SSF57798">
    <property type="entry name" value="Casein kinase II beta subunit"/>
    <property type="match status" value="1"/>
</dbReference>
<dbReference type="PROSITE" id="PS01101">
    <property type="entry name" value="CK2_BETA"/>
    <property type="match status" value="1"/>
</dbReference>
<feature type="chain" id="PRO_0000068244" description="Casein kinase II subunit beta">
    <location>
        <begin position="1"/>
        <end position="234"/>
    </location>
</feature>
<feature type="modified residue" description="Phosphoserine; by autocatalysis" evidence="3">
    <location>
        <position position="2"/>
    </location>
</feature>
<feature type="splice variant" id="VSP_001093" description="In isoform b." evidence="3">
    <original>P</original>
    <variation>PE</variation>
    <location>
        <position position="58"/>
    </location>
</feature>
<feature type="sequence conflict" description="In Ref. 1; AAA27983." evidence="3" ref="1">
    <original>D</original>
    <variation>M</variation>
    <location>
        <position position="141"/>
    </location>
</feature>
<accession>P28548</accession>
<accession>O62352</accession>
<accession>Q22077</accession>
<protein>
    <recommendedName>
        <fullName>Casein kinase II subunit beta</fullName>
        <shortName>CK II beta</shortName>
    </recommendedName>
</protein>
<comment type="function">
    <text evidence="1 2">Participates in Wnt signaling. Plays a complex role in regulating the basal catalytic activity of the alpha subunit (By similarity). Modulates two aspects of male mating behavior; response to hermaphrodite contact and vulval location, acting in the same pathway as lov-1 and pkd-2.</text>
</comment>
<comment type="subunit">
    <text evidence="2">Tetramer of two alpha and two beta subunits. Interacts (via C-terminus) with lov-1 (via PLAT domain).</text>
</comment>
<comment type="interaction">
    <interactant intactId="EBI-317777">
        <id>P28548</id>
    </interactant>
    <interactant intactId="EBI-367861">
        <id>P18334</id>
        <label>kin-3</label>
    </interactant>
    <organismsDiffer>false</organismsDiffer>
    <experiments>5</experiments>
</comment>
<comment type="interaction">
    <interactant intactId="EBI-317777">
        <id>P28548</id>
    </interactant>
    <interactant intactId="EBI-3843983">
        <id>Q11184</id>
        <label>let-756</label>
    </interactant>
    <organismsDiffer>false</organismsDiffer>
    <experiments>3</experiments>
</comment>
<comment type="interaction">
    <interactant intactId="EBI-317777">
        <id>P28548</id>
    </interactant>
    <interactant intactId="EBI-2529627">
        <id>Q09624</id>
        <label>lov-1</label>
    </interactant>
    <organismsDiffer>false</organismsDiffer>
    <experiments>2</experiments>
</comment>
<comment type="subcellular location">
    <subcellularLocation>
        <location evidence="2">Cell projection</location>
        <location evidence="2">Axon</location>
    </subcellularLocation>
    <subcellularLocation>
        <location evidence="2">Cell projection</location>
        <location evidence="2">Cilium</location>
    </subcellularLocation>
    <subcellularLocation>
        <location evidence="2">Cell projection</location>
        <location evidence="2">Dendrite</location>
    </subcellularLocation>
    <subcellularLocation>
        <location evidence="2">Perikaryon</location>
    </subcellularLocation>
    <text>Enriched in cilia in male sensory neurons.</text>
</comment>
<comment type="alternative products">
    <event type="alternative splicing"/>
    <isoform>
        <id>P28548-1</id>
        <name>a</name>
        <sequence type="displayed"/>
    </isoform>
    <isoform>
        <id>P28548-2</id>
        <name>b</name>
        <sequence type="described" ref="VSP_001093"/>
    </isoform>
</comment>
<comment type="tissue specificity">
    <text evidence="2">Expressed in a subset of the adult male sensory neurons: CEM head neurons, ray RnB neurons, and hook HOB tail neurons.</text>
</comment>
<comment type="developmental stage">
    <text>Elevated levels are observed during embryogenesis, liver regeneration, and adipocyte differentiation.</text>
</comment>
<comment type="PTM">
    <text evidence="1">Phosphorylated by alpha subunit.</text>
</comment>
<comment type="similarity">
    <text evidence="3">Belongs to the casein kinase 2 subunit beta family.</text>
</comment>
<organism>
    <name type="scientific">Caenorhabditis elegans</name>
    <dbReference type="NCBI Taxonomy" id="6239"/>
    <lineage>
        <taxon>Eukaryota</taxon>
        <taxon>Metazoa</taxon>
        <taxon>Ecdysozoa</taxon>
        <taxon>Nematoda</taxon>
        <taxon>Chromadorea</taxon>
        <taxon>Rhabditida</taxon>
        <taxon>Rhabditina</taxon>
        <taxon>Rhabditomorpha</taxon>
        <taxon>Rhabditoidea</taxon>
        <taxon>Rhabditidae</taxon>
        <taxon>Peloderinae</taxon>
        <taxon>Caenorhabditis</taxon>
    </lineage>
</organism>
<proteinExistence type="evidence at protein level"/>
<name>CSK2B_CAEEL</name>
<evidence type="ECO:0000250" key="1"/>
<evidence type="ECO:0000269" key="2">
    <source>
    </source>
</evidence>
<evidence type="ECO:0000305" key="3"/>